<organism>
    <name type="scientific">Xylella fastidiosa (strain M23)</name>
    <dbReference type="NCBI Taxonomy" id="405441"/>
    <lineage>
        <taxon>Bacteria</taxon>
        <taxon>Pseudomonadati</taxon>
        <taxon>Pseudomonadota</taxon>
        <taxon>Gammaproteobacteria</taxon>
        <taxon>Lysobacterales</taxon>
        <taxon>Lysobacteraceae</taxon>
        <taxon>Xylella</taxon>
    </lineage>
</organism>
<sequence>MLPLVALVGRPNVGKSTLFNALTLTRDALVHDQPGVTRDRHYGVCRIDGQPLFAVVDTGGMVGKEDGLAGATARQARLAVAEADVVLFVVNVREGASALDDDILAWLRKLSQPTLLVINKIDGVSDTTVHSEFAHYGFSDVVPVSAAHRQGLDDLIEQVLAWLPERSIGEAFNEDSERIHIAFVGRPNVGKSTLVNRLLGEERMIVSDVPGTTRDSITVDLERDELRYRLVDTAGLRRKSKVEEAVEKFSAFKTLQAIEQCQVAVLLLDAGEGVTDQDATVLAAILDAGKALVVAMNKWDGLATYQREQAEDLLSRKLGFVNWAEVVRLSAKHGSGLRELFRAIHRAHVSALRQFSTSEVNKALEIAYQTAPPPSIRGHVSKLRYVHPAGSNPPTFIVHGTRLKVLPDTYKRYLENFFRKRFKLVGTPVRFLFREGDNPYEGRKNVLSERQIQRRRRLMRHVKRK</sequence>
<keyword id="KW-0342">GTP-binding</keyword>
<keyword id="KW-0547">Nucleotide-binding</keyword>
<keyword id="KW-0677">Repeat</keyword>
<keyword id="KW-0690">Ribosome biogenesis</keyword>
<feature type="chain" id="PRO_1000099181" description="GTPase Der">
    <location>
        <begin position="1"/>
        <end position="465"/>
    </location>
</feature>
<feature type="domain" description="EngA-type G 1">
    <location>
        <begin position="3"/>
        <end position="167"/>
    </location>
</feature>
<feature type="domain" description="EngA-type G 2">
    <location>
        <begin position="179"/>
        <end position="352"/>
    </location>
</feature>
<feature type="domain" description="KH-like" evidence="1">
    <location>
        <begin position="353"/>
        <end position="437"/>
    </location>
</feature>
<feature type="binding site" evidence="1">
    <location>
        <begin position="9"/>
        <end position="16"/>
    </location>
    <ligand>
        <name>GTP</name>
        <dbReference type="ChEBI" id="CHEBI:37565"/>
        <label>1</label>
    </ligand>
</feature>
<feature type="binding site" evidence="1">
    <location>
        <begin position="57"/>
        <end position="61"/>
    </location>
    <ligand>
        <name>GTP</name>
        <dbReference type="ChEBI" id="CHEBI:37565"/>
        <label>1</label>
    </ligand>
</feature>
<feature type="binding site" evidence="1">
    <location>
        <begin position="119"/>
        <end position="122"/>
    </location>
    <ligand>
        <name>GTP</name>
        <dbReference type="ChEBI" id="CHEBI:37565"/>
        <label>1</label>
    </ligand>
</feature>
<feature type="binding site" evidence="1">
    <location>
        <begin position="185"/>
        <end position="192"/>
    </location>
    <ligand>
        <name>GTP</name>
        <dbReference type="ChEBI" id="CHEBI:37565"/>
        <label>2</label>
    </ligand>
</feature>
<feature type="binding site" evidence="1">
    <location>
        <begin position="232"/>
        <end position="236"/>
    </location>
    <ligand>
        <name>GTP</name>
        <dbReference type="ChEBI" id="CHEBI:37565"/>
        <label>2</label>
    </ligand>
</feature>
<feature type="binding site" evidence="1">
    <location>
        <begin position="297"/>
        <end position="300"/>
    </location>
    <ligand>
        <name>GTP</name>
        <dbReference type="ChEBI" id="CHEBI:37565"/>
        <label>2</label>
    </ligand>
</feature>
<dbReference type="EMBL" id="CP001011">
    <property type="protein sequence ID" value="ACB93115.1"/>
    <property type="molecule type" value="Genomic_DNA"/>
</dbReference>
<dbReference type="RefSeq" id="WP_004089777.1">
    <property type="nucleotide sequence ID" value="NC_010577.1"/>
</dbReference>
<dbReference type="SMR" id="B2I7V0"/>
<dbReference type="GeneID" id="93905453"/>
<dbReference type="KEGG" id="xfn:XfasM23_1711"/>
<dbReference type="HOGENOM" id="CLU_016077_6_2_6"/>
<dbReference type="Proteomes" id="UP000001698">
    <property type="component" value="Chromosome"/>
</dbReference>
<dbReference type="GO" id="GO:0016887">
    <property type="term" value="F:ATP hydrolysis activity"/>
    <property type="evidence" value="ECO:0007669"/>
    <property type="project" value="InterPro"/>
</dbReference>
<dbReference type="GO" id="GO:0005525">
    <property type="term" value="F:GTP binding"/>
    <property type="evidence" value="ECO:0007669"/>
    <property type="project" value="UniProtKB-UniRule"/>
</dbReference>
<dbReference type="GO" id="GO:0043022">
    <property type="term" value="F:ribosome binding"/>
    <property type="evidence" value="ECO:0007669"/>
    <property type="project" value="TreeGrafter"/>
</dbReference>
<dbReference type="GO" id="GO:0042254">
    <property type="term" value="P:ribosome biogenesis"/>
    <property type="evidence" value="ECO:0007669"/>
    <property type="project" value="UniProtKB-KW"/>
</dbReference>
<dbReference type="CDD" id="cd01894">
    <property type="entry name" value="EngA1"/>
    <property type="match status" value="1"/>
</dbReference>
<dbReference type="CDD" id="cd01895">
    <property type="entry name" value="EngA2"/>
    <property type="match status" value="1"/>
</dbReference>
<dbReference type="FunFam" id="3.30.300.20:FF:000004">
    <property type="entry name" value="GTPase Der"/>
    <property type="match status" value="1"/>
</dbReference>
<dbReference type="FunFam" id="3.40.50.300:FF:000040">
    <property type="entry name" value="GTPase Der"/>
    <property type="match status" value="1"/>
</dbReference>
<dbReference type="FunFam" id="3.40.50.300:FF:000057">
    <property type="entry name" value="GTPase Der"/>
    <property type="match status" value="1"/>
</dbReference>
<dbReference type="Gene3D" id="3.30.300.20">
    <property type="match status" value="1"/>
</dbReference>
<dbReference type="Gene3D" id="3.40.50.300">
    <property type="entry name" value="P-loop containing nucleotide triphosphate hydrolases"/>
    <property type="match status" value="2"/>
</dbReference>
<dbReference type="HAMAP" id="MF_00195">
    <property type="entry name" value="GTPase_Der"/>
    <property type="match status" value="1"/>
</dbReference>
<dbReference type="InterPro" id="IPR003593">
    <property type="entry name" value="AAA+_ATPase"/>
</dbReference>
<dbReference type="InterPro" id="IPR031166">
    <property type="entry name" value="G_ENGA"/>
</dbReference>
<dbReference type="InterPro" id="IPR006073">
    <property type="entry name" value="GTP-bd"/>
</dbReference>
<dbReference type="InterPro" id="IPR016484">
    <property type="entry name" value="GTPase_Der"/>
</dbReference>
<dbReference type="InterPro" id="IPR032859">
    <property type="entry name" value="KH_dom-like"/>
</dbReference>
<dbReference type="InterPro" id="IPR015946">
    <property type="entry name" value="KH_dom-like_a/b"/>
</dbReference>
<dbReference type="InterPro" id="IPR027417">
    <property type="entry name" value="P-loop_NTPase"/>
</dbReference>
<dbReference type="InterPro" id="IPR005225">
    <property type="entry name" value="Small_GTP-bd"/>
</dbReference>
<dbReference type="NCBIfam" id="TIGR03594">
    <property type="entry name" value="GTPase_EngA"/>
    <property type="match status" value="1"/>
</dbReference>
<dbReference type="NCBIfam" id="TIGR00231">
    <property type="entry name" value="small_GTP"/>
    <property type="match status" value="2"/>
</dbReference>
<dbReference type="PANTHER" id="PTHR43834">
    <property type="entry name" value="GTPASE DER"/>
    <property type="match status" value="1"/>
</dbReference>
<dbReference type="PANTHER" id="PTHR43834:SF6">
    <property type="entry name" value="GTPASE DER"/>
    <property type="match status" value="1"/>
</dbReference>
<dbReference type="Pfam" id="PF14714">
    <property type="entry name" value="KH_dom-like"/>
    <property type="match status" value="1"/>
</dbReference>
<dbReference type="Pfam" id="PF01926">
    <property type="entry name" value="MMR_HSR1"/>
    <property type="match status" value="2"/>
</dbReference>
<dbReference type="PIRSF" id="PIRSF006485">
    <property type="entry name" value="GTP-binding_EngA"/>
    <property type="match status" value="1"/>
</dbReference>
<dbReference type="PRINTS" id="PR00326">
    <property type="entry name" value="GTP1OBG"/>
</dbReference>
<dbReference type="SMART" id="SM00382">
    <property type="entry name" value="AAA"/>
    <property type="match status" value="2"/>
</dbReference>
<dbReference type="SUPFAM" id="SSF52540">
    <property type="entry name" value="P-loop containing nucleoside triphosphate hydrolases"/>
    <property type="match status" value="2"/>
</dbReference>
<dbReference type="PROSITE" id="PS51712">
    <property type="entry name" value="G_ENGA"/>
    <property type="match status" value="2"/>
</dbReference>
<protein>
    <recommendedName>
        <fullName evidence="1">GTPase Der</fullName>
    </recommendedName>
    <alternativeName>
        <fullName evidence="1">GTP-binding protein EngA</fullName>
    </alternativeName>
</protein>
<gene>
    <name evidence="1" type="primary">der</name>
    <name type="synonym">engA</name>
    <name type="ordered locus">XfasM23_1711</name>
</gene>
<accession>B2I7V0</accession>
<name>DER_XYLF2</name>
<comment type="function">
    <text evidence="1">GTPase that plays an essential role in the late steps of ribosome biogenesis.</text>
</comment>
<comment type="subunit">
    <text evidence="1">Associates with the 50S ribosomal subunit.</text>
</comment>
<comment type="similarity">
    <text evidence="1">Belongs to the TRAFAC class TrmE-Era-EngA-EngB-Septin-like GTPase superfamily. EngA (Der) GTPase family.</text>
</comment>
<evidence type="ECO:0000255" key="1">
    <source>
        <dbReference type="HAMAP-Rule" id="MF_00195"/>
    </source>
</evidence>
<reference key="1">
    <citation type="journal article" date="2010" name="J. Bacteriol.">
        <title>Whole genome sequences of two Xylella fastidiosa strains (M12 and M23) causing almond leaf scorch disease in California.</title>
        <authorList>
            <person name="Chen J."/>
            <person name="Xie G."/>
            <person name="Han S."/>
            <person name="Chertkov O."/>
            <person name="Sims D."/>
            <person name="Civerolo E.L."/>
        </authorList>
    </citation>
    <scope>NUCLEOTIDE SEQUENCE [LARGE SCALE GENOMIC DNA]</scope>
    <source>
        <strain>M23</strain>
    </source>
</reference>
<proteinExistence type="inferred from homology"/>